<evidence type="ECO:0000250" key="1"/>
<evidence type="ECO:0000255" key="2">
    <source>
        <dbReference type="PROSITE-ProRule" id="PRU00114"/>
    </source>
</evidence>
<evidence type="ECO:0000305" key="3"/>
<reference key="1">
    <citation type="journal article" date="1998" name="Immunogenetics">
        <title>Beta-2-microglobulin in neotropical primates (Platyrrhini).</title>
        <authorList>
            <person name="Canavez F.C."/>
            <person name="Ladasky J.J."/>
            <person name="Muniz J.A.P.C."/>
            <person name="Seuanez H.N."/>
            <person name="Parham P."/>
        </authorList>
    </citation>
    <scope>NUCLEOTIDE SEQUENCE [GENOMIC DNA]</scope>
    <source>
        <tissue>Blood</tissue>
    </source>
</reference>
<protein>
    <recommendedName>
        <fullName>Beta-2-microglobulin</fullName>
    </recommendedName>
</protein>
<accession>P63067</accession>
<accession>O77826</accession>
<gene>
    <name type="primary">B2M</name>
</gene>
<sequence>MARFVVAALLVLLCLSGLEAIQHAPKIQVYSRHPAENGKPNFLNCYVSGFHPSDIEVDLLKNGKKIEKVEHSDLSFSKDWSFYLLYYTEFTPNEKDEYACRVSHVTFPTPKTVKWDRNM</sequence>
<dbReference type="EMBL" id="AF032018">
    <property type="protein sequence ID" value="AAC52108.1"/>
    <property type="molecule type" value="Genomic_DNA"/>
</dbReference>
<dbReference type="EMBL" id="AF032017">
    <property type="protein sequence ID" value="AAC52108.1"/>
    <property type="status" value="JOINED"/>
    <property type="molecule type" value="Genomic_DNA"/>
</dbReference>
<dbReference type="SMR" id="P63067"/>
<dbReference type="GO" id="GO:0005576">
    <property type="term" value="C:extracellular region"/>
    <property type="evidence" value="ECO:0007669"/>
    <property type="project" value="UniProtKB-SubCell"/>
</dbReference>
<dbReference type="GO" id="GO:0042612">
    <property type="term" value="C:MHC class I protein complex"/>
    <property type="evidence" value="ECO:0007669"/>
    <property type="project" value="UniProtKB-KW"/>
</dbReference>
<dbReference type="GO" id="GO:0002474">
    <property type="term" value="P:antigen processing and presentation of peptide antigen via MHC class I"/>
    <property type="evidence" value="ECO:0007669"/>
    <property type="project" value="UniProtKB-KW"/>
</dbReference>
<dbReference type="GO" id="GO:0006955">
    <property type="term" value="P:immune response"/>
    <property type="evidence" value="ECO:0007669"/>
    <property type="project" value="InterPro"/>
</dbReference>
<dbReference type="CDD" id="cd05770">
    <property type="entry name" value="IgC1_beta2m"/>
    <property type="match status" value="1"/>
</dbReference>
<dbReference type="FunFam" id="2.60.40.10:FF:001005">
    <property type="entry name" value="Beta-2-microglobulin"/>
    <property type="match status" value="1"/>
</dbReference>
<dbReference type="Gene3D" id="2.60.40.10">
    <property type="entry name" value="Immunoglobulins"/>
    <property type="match status" value="1"/>
</dbReference>
<dbReference type="InterPro" id="IPR015707">
    <property type="entry name" value="B2Microglobulin"/>
</dbReference>
<dbReference type="InterPro" id="IPR007110">
    <property type="entry name" value="Ig-like_dom"/>
</dbReference>
<dbReference type="InterPro" id="IPR036179">
    <property type="entry name" value="Ig-like_dom_sf"/>
</dbReference>
<dbReference type="InterPro" id="IPR013783">
    <property type="entry name" value="Ig-like_fold"/>
</dbReference>
<dbReference type="InterPro" id="IPR003006">
    <property type="entry name" value="Ig/MHC_CS"/>
</dbReference>
<dbReference type="InterPro" id="IPR003597">
    <property type="entry name" value="Ig_C1-set"/>
</dbReference>
<dbReference type="InterPro" id="IPR050160">
    <property type="entry name" value="MHC/Immunoglobulin"/>
</dbReference>
<dbReference type="PANTHER" id="PTHR19944:SF62">
    <property type="entry name" value="BETA-2-MICROGLOBULIN"/>
    <property type="match status" value="1"/>
</dbReference>
<dbReference type="PANTHER" id="PTHR19944">
    <property type="entry name" value="MHC CLASS II-RELATED"/>
    <property type="match status" value="1"/>
</dbReference>
<dbReference type="Pfam" id="PF07654">
    <property type="entry name" value="C1-set"/>
    <property type="match status" value="1"/>
</dbReference>
<dbReference type="SMART" id="SM00407">
    <property type="entry name" value="IGc1"/>
    <property type="match status" value="1"/>
</dbReference>
<dbReference type="SUPFAM" id="SSF48726">
    <property type="entry name" value="Immunoglobulin"/>
    <property type="match status" value="1"/>
</dbReference>
<dbReference type="PROSITE" id="PS50835">
    <property type="entry name" value="IG_LIKE"/>
    <property type="match status" value="1"/>
</dbReference>
<dbReference type="PROSITE" id="PS00290">
    <property type="entry name" value="IG_MHC"/>
    <property type="match status" value="1"/>
</dbReference>
<proteinExistence type="inferred from homology"/>
<keyword id="KW-1015">Disulfide bond</keyword>
<keyword id="KW-0391">Immunity</keyword>
<keyword id="KW-0393">Immunoglobulin domain</keyword>
<keyword id="KW-0490">MHC I</keyword>
<keyword id="KW-0964">Secreted</keyword>
<keyword id="KW-0732">Signal</keyword>
<comment type="function">
    <text evidence="1">Component of the class I major histocompatibility complex (MHC). Involved in the presentation of peptide antigens to the immune system (By similarity).</text>
</comment>
<comment type="subunit">
    <text evidence="1">Heterodimer of an alpha chain and a beta chain. Beta-2-microglobulin is the beta-chain of major histocompatibility complex class I molecules (By similarity).</text>
</comment>
<comment type="subcellular location">
    <subcellularLocation>
        <location evidence="1">Secreted</location>
    </subcellularLocation>
</comment>
<comment type="similarity">
    <text evidence="3">Belongs to the beta-2-microglobulin family.</text>
</comment>
<name>B2MG_CEBOL</name>
<feature type="signal peptide" evidence="1">
    <location>
        <begin position="1"/>
        <end position="20"/>
    </location>
</feature>
<feature type="chain" id="PRO_0000018773" description="Beta-2-microglobulin">
    <location>
        <begin position="21"/>
        <end position="119"/>
    </location>
</feature>
<feature type="domain" description="Ig-like C1-type">
    <location>
        <begin position="25"/>
        <end position="114"/>
    </location>
</feature>
<feature type="disulfide bond" evidence="2">
    <location>
        <begin position="45"/>
        <end position="100"/>
    </location>
</feature>
<organism>
    <name type="scientific">Cebus olivaceus</name>
    <name type="common">Weeper capuchin</name>
    <dbReference type="NCBI Taxonomy" id="37295"/>
    <lineage>
        <taxon>Eukaryota</taxon>
        <taxon>Metazoa</taxon>
        <taxon>Chordata</taxon>
        <taxon>Craniata</taxon>
        <taxon>Vertebrata</taxon>
        <taxon>Euteleostomi</taxon>
        <taxon>Mammalia</taxon>
        <taxon>Eutheria</taxon>
        <taxon>Euarchontoglires</taxon>
        <taxon>Primates</taxon>
        <taxon>Haplorrhini</taxon>
        <taxon>Platyrrhini</taxon>
        <taxon>Cebidae</taxon>
        <taxon>Cebinae</taxon>
        <taxon>Cebus</taxon>
    </lineage>
</organism>